<accession>A4T0E0</accession>
<feature type="chain" id="PRO_0000348788" description="tRNA-cytidine(32) 2-sulfurtransferase">
    <location>
        <begin position="1"/>
        <end position="302"/>
    </location>
</feature>
<feature type="short sequence motif" description="PP-loop motif" evidence="1">
    <location>
        <begin position="43"/>
        <end position="48"/>
    </location>
</feature>
<feature type="binding site" evidence="1">
    <location>
        <position position="118"/>
    </location>
    <ligand>
        <name>[4Fe-4S] cluster</name>
        <dbReference type="ChEBI" id="CHEBI:49883"/>
    </ligand>
</feature>
<feature type="binding site" evidence="1">
    <location>
        <position position="121"/>
    </location>
    <ligand>
        <name>[4Fe-4S] cluster</name>
        <dbReference type="ChEBI" id="CHEBI:49883"/>
    </ligand>
</feature>
<feature type="binding site" evidence="1">
    <location>
        <position position="209"/>
    </location>
    <ligand>
        <name>[4Fe-4S] cluster</name>
        <dbReference type="ChEBI" id="CHEBI:49883"/>
    </ligand>
</feature>
<organism>
    <name type="scientific">Polynucleobacter asymbioticus (strain DSM 18221 / CIP 109841 / QLW-P1DMWA-1)</name>
    <name type="common">Polynucleobacter necessarius subsp. asymbioticus</name>
    <dbReference type="NCBI Taxonomy" id="312153"/>
    <lineage>
        <taxon>Bacteria</taxon>
        <taxon>Pseudomonadati</taxon>
        <taxon>Pseudomonadota</taxon>
        <taxon>Betaproteobacteria</taxon>
        <taxon>Burkholderiales</taxon>
        <taxon>Burkholderiaceae</taxon>
        <taxon>Polynucleobacter</taxon>
    </lineage>
</organism>
<evidence type="ECO:0000255" key="1">
    <source>
        <dbReference type="HAMAP-Rule" id="MF_01850"/>
    </source>
</evidence>
<keyword id="KW-0004">4Fe-4S</keyword>
<keyword id="KW-0067">ATP-binding</keyword>
<keyword id="KW-0963">Cytoplasm</keyword>
<keyword id="KW-0408">Iron</keyword>
<keyword id="KW-0411">Iron-sulfur</keyword>
<keyword id="KW-0460">Magnesium</keyword>
<keyword id="KW-0479">Metal-binding</keyword>
<keyword id="KW-0547">Nucleotide-binding</keyword>
<keyword id="KW-1185">Reference proteome</keyword>
<keyword id="KW-0694">RNA-binding</keyword>
<keyword id="KW-0808">Transferase</keyword>
<keyword id="KW-0819">tRNA processing</keyword>
<keyword id="KW-0820">tRNA-binding</keyword>
<gene>
    <name evidence="1" type="primary">ttcA</name>
    <name type="ordered locus">Pnuc_1993</name>
</gene>
<comment type="function">
    <text evidence="1">Catalyzes the ATP-dependent 2-thiolation of cytidine in position 32 of tRNA, to form 2-thiocytidine (s(2)C32). The sulfur atoms are provided by the cysteine/cysteine desulfurase (IscS) system.</text>
</comment>
<comment type="catalytic activity">
    <reaction evidence="1">
        <text>cytidine(32) in tRNA + S-sulfanyl-L-cysteinyl-[cysteine desulfurase] + AH2 + ATP = 2-thiocytidine(32) in tRNA + L-cysteinyl-[cysteine desulfurase] + A + AMP + diphosphate + H(+)</text>
        <dbReference type="Rhea" id="RHEA:57048"/>
        <dbReference type="Rhea" id="RHEA-COMP:10288"/>
        <dbReference type="Rhea" id="RHEA-COMP:12157"/>
        <dbReference type="Rhea" id="RHEA-COMP:12158"/>
        <dbReference type="Rhea" id="RHEA-COMP:14821"/>
        <dbReference type="ChEBI" id="CHEBI:13193"/>
        <dbReference type="ChEBI" id="CHEBI:15378"/>
        <dbReference type="ChEBI" id="CHEBI:17499"/>
        <dbReference type="ChEBI" id="CHEBI:29950"/>
        <dbReference type="ChEBI" id="CHEBI:30616"/>
        <dbReference type="ChEBI" id="CHEBI:33019"/>
        <dbReference type="ChEBI" id="CHEBI:61963"/>
        <dbReference type="ChEBI" id="CHEBI:82748"/>
        <dbReference type="ChEBI" id="CHEBI:141453"/>
        <dbReference type="ChEBI" id="CHEBI:456215"/>
    </reaction>
    <physiologicalReaction direction="left-to-right" evidence="1">
        <dbReference type="Rhea" id="RHEA:57049"/>
    </physiologicalReaction>
</comment>
<comment type="cofactor">
    <cofactor evidence="1">
        <name>Mg(2+)</name>
        <dbReference type="ChEBI" id="CHEBI:18420"/>
    </cofactor>
</comment>
<comment type="cofactor">
    <cofactor evidence="1">
        <name>[4Fe-4S] cluster</name>
        <dbReference type="ChEBI" id="CHEBI:49883"/>
    </cofactor>
    <text evidence="1">Binds 1 [4Fe-4S] cluster per subunit. The cluster is chelated by three Cys residues, the fourth Fe has a free coordination site that may bind a sulfur atom transferred from the persulfide of IscS.</text>
</comment>
<comment type="pathway">
    <text evidence="1">tRNA modification.</text>
</comment>
<comment type="subunit">
    <text evidence="1">Homodimer.</text>
</comment>
<comment type="subcellular location">
    <subcellularLocation>
        <location evidence="1">Cytoplasm</location>
    </subcellularLocation>
</comment>
<comment type="miscellaneous">
    <text evidence="1">The thiolation reaction likely consists of two steps: a first activation step by ATP to form an adenylated intermediate of the target base of tRNA, and a second nucleophilic substitution step of the sulfur (S) atom supplied by the hydrosulfide attached to the Fe-S cluster.</text>
</comment>
<comment type="similarity">
    <text evidence="1">Belongs to the TtcA family.</text>
</comment>
<name>TTCA_POLAQ</name>
<protein>
    <recommendedName>
        <fullName evidence="1">tRNA-cytidine(32) 2-sulfurtransferase</fullName>
        <ecNumber evidence="1">2.8.1.-</ecNumber>
    </recommendedName>
    <alternativeName>
        <fullName evidence="1">Two-thiocytidine biosynthesis protein A</fullName>
    </alternativeName>
    <alternativeName>
        <fullName evidence="1">tRNA 2-thiocytidine biosynthesis protein TtcA</fullName>
    </alternativeName>
</protein>
<proteinExistence type="inferred from homology"/>
<sequence length="302" mass="34105">MGDIRKVVFEENKLEKKLCRLVGQAIGDFGMIEDGDKVMVCVSGGKDSYAMLDILMKLRERAPIDFEIVAVNLDQKQPNFPAETLPNYLRSLGIPFHIEEQDTYSIVKRVIPEGKTTCGLCSRLRRGILYRVADELGATKIALGHHRDDILETLMLNMFYAGKLKGMPPKLRSDDGKHIVIRPLAYVPEKLLERYAIDMNFPIIPCDLCGSQPNLQRQVMKEMLRDWEKKHPGRVENLFRSMHHIVPSHLMDGEAFDFKNLEISTELSGIAARSSGDRAIDEADLDELACGTMIQGTYNPSL</sequence>
<reference key="1">
    <citation type="journal article" date="2012" name="Stand. Genomic Sci.">
        <title>Complete genome sequence of Polynucleobacter necessarius subsp. asymbioticus type strain (QLW-P1DMWA-1(T)).</title>
        <authorList>
            <person name="Meincke L."/>
            <person name="Copeland A."/>
            <person name="Lapidus A."/>
            <person name="Lucas S."/>
            <person name="Berry K.W."/>
            <person name="Del Rio T.G."/>
            <person name="Hammon N."/>
            <person name="Dalin E."/>
            <person name="Tice H."/>
            <person name="Pitluck S."/>
            <person name="Richardson P."/>
            <person name="Bruce D."/>
            <person name="Goodwin L."/>
            <person name="Han C."/>
            <person name="Tapia R."/>
            <person name="Detter J.C."/>
            <person name="Schmutz J."/>
            <person name="Brettin T."/>
            <person name="Larimer F."/>
            <person name="Land M."/>
            <person name="Hauser L."/>
            <person name="Kyrpides N.C."/>
            <person name="Ivanova N."/>
            <person name="Goker M."/>
            <person name="Woyke T."/>
            <person name="Wu Q.L."/>
            <person name="Pockl M."/>
            <person name="Hahn M.W."/>
            <person name="Klenk H.P."/>
        </authorList>
    </citation>
    <scope>NUCLEOTIDE SEQUENCE [LARGE SCALE GENOMIC DNA]</scope>
    <source>
        <strain>DSM 18221 / CIP 109841 / QLW-P1DMWA-1</strain>
    </source>
</reference>
<dbReference type="EC" id="2.8.1.-" evidence="1"/>
<dbReference type="EMBL" id="CP000655">
    <property type="protein sequence ID" value="ABP35204.1"/>
    <property type="molecule type" value="Genomic_DNA"/>
</dbReference>
<dbReference type="RefSeq" id="WP_011903827.1">
    <property type="nucleotide sequence ID" value="NC_009379.1"/>
</dbReference>
<dbReference type="SMR" id="A4T0E0"/>
<dbReference type="GeneID" id="31482383"/>
<dbReference type="KEGG" id="pnu:Pnuc_1993"/>
<dbReference type="eggNOG" id="COG0037">
    <property type="taxonomic scope" value="Bacteria"/>
</dbReference>
<dbReference type="HOGENOM" id="CLU_026481_0_0_4"/>
<dbReference type="Proteomes" id="UP000000231">
    <property type="component" value="Chromosome"/>
</dbReference>
<dbReference type="GO" id="GO:0005737">
    <property type="term" value="C:cytoplasm"/>
    <property type="evidence" value="ECO:0007669"/>
    <property type="project" value="UniProtKB-SubCell"/>
</dbReference>
<dbReference type="GO" id="GO:0051539">
    <property type="term" value="F:4 iron, 4 sulfur cluster binding"/>
    <property type="evidence" value="ECO:0007669"/>
    <property type="project" value="UniProtKB-UniRule"/>
</dbReference>
<dbReference type="GO" id="GO:0005524">
    <property type="term" value="F:ATP binding"/>
    <property type="evidence" value="ECO:0007669"/>
    <property type="project" value="UniProtKB-UniRule"/>
</dbReference>
<dbReference type="GO" id="GO:0000287">
    <property type="term" value="F:magnesium ion binding"/>
    <property type="evidence" value="ECO:0007669"/>
    <property type="project" value="UniProtKB-UniRule"/>
</dbReference>
<dbReference type="GO" id="GO:0016783">
    <property type="term" value="F:sulfurtransferase activity"/>
    <property type="evidence" value="ECO:0007669"/>
    <property type="project" value="UniProtKB-UniRule"/>
</dbReference>
<dbReference type="GO" id="GO:0000049">
    <property type="term" value="F:tRNA binding"/>
    <property type="evidence" value="ECO:0007669"/>
    <property type="project" value="UniProtKB-KW"/>
</dbReference>
<dbReference type="GO" id="GO:0034227">
    <property type="term" value="P:tRNA thio-modification"/>
    <property type="evidence" value="ECO:0007669"/>
    <property type="project" value="UniProtKB-UniRule"/>
</dbReference>
<dbReference type="CDD" id="cd24138">
    <property type="entry name" value="TtcA-like"/>
    <property type="match status" value="1"/>
</dbReference>
<dbReference type="Gene3D" id="3.40.50.620">
    <property type="entry name" value="HUPs"/>
    <property type="match status" value="1"/>
</dbReference>
<dbReference type="HAMAP" id="MF_01850">
    <property type="entry name" value="TtcA"/>
    <property type="match status" value="1"/>
</dbReference>
<dbReference type="InterPro" id="IPR014729">
    <property type="entry name" value="Rossmann-like_a/b/a_fold"/>
</dbReference>
<dbReference type="InterPro" id="IPR011063">
    <property type="entry name" value="TilS/TtcA_N"/>
</dbReference>
<dbReference type="InterPro" id="IPR012089">
    <property type="entry name" value="tRNA_Cyd_32_2_STrfase"/>
</dbReference>
<dbReference type="InterPro" id="IPR035107">
    <property type="entry name" value="tRNA_thiolation_TtcA_Ctu1"/>
</dbReference>
<dbReference type="NCBIfam" id="NF007972">
    <property type="entry name" value="PRK10696.1"/>
    <property type="match status" value="1"/>
</dbReference>
<dbReference type="PANTHER" id="PTHR43686:SF1">
    <property type="entry name" value="AMINOTRAN_5 DOMAIN-CONTAINING PROTEIN"/>
    <property type="match status" value="1"/>
</dbReference>
<dbReference type="PANTHER" id="PTHR43686">
    <property type="entry name" value="SULFURTRANSFERASE-RELATED"/>
    <property type="match status" value="1"/>
</dbReference>
<dbReference type="Pfam" id="PF01171">
    <property type="entry name" value="ATP_bind_3"/>
    <property type="match status" value="1"/>
</dbReference>
<dbReference type="PIRSF" id="PIRSF004976">
    <property type="entry name" value="ATPase_YdaO"/>
    <property type="match status" value="1"/>
</dbReference>
<dbReference type="SUPFAM" id="SSF52402">
    <property type="entry name" value="Adenine nucleotide alpha hydrolases-like"/>
    <property type="match status" value="1"/>
</dbReference>